<reference key="1">
    <citation type="journal article" date="1992" name="J. Bacteriol.">
        <title>Oligopeptidase A is required for normal phage P22 development.</title>
        <authorList>
            <person name="Conlin C.A."/>
            <person name="Vimr E.R."/>
            <person name="Miller C.G."/>
        </authorList>
    </citation>
    <scope>NUCLEOTIDE SEQUENCE</scope>
</reference>
<reference key="2">
    <citation type="journal article" date="2000" name="J. Bacteriol.">
        <title>Sequence of the genome of Salmonella bacteriophage P22.</title>
        <authorList>
            <person name="Vander Byl C.S."/>
            <person name="Kropinski A.M.B."/>
        </authorList>
    </citation>
    <scope>NUCLEOTIDE SEQUENCE [LARGE SCALE GENOMIC DNA]</scope>
</reference>
<keyword id="KW-0426">Late protein</keyword>
<name>VG14_BPP22</name>
<sequence length="151" mass="17242">MITFTPTRNIDLIEMVGNHPDIIAGSNNGDGYDYKPECRYFEVNVHGQFGGIVYYNEIQPMTFDCHAMYLPEIRGFSKEIGLAFWRYILTNTTVQCVTSFAARKFADGQMYCAMIGLKRVGTIKKYFKGVDDVTFYAATREELTELLNNGR</sequence>
<accession>Q01075</accession>
<organism>
    <name type="scientific">Salmonella phage P22</name>
    <name type="common">Bacteriophage P22</name>
    <dbReference type="NCBI Taxonomy" id="10754"/>
    <lineage>
        <taxon>Viruses</taxon>
        <taxon>Duplodnaviria</taxon>
        <taxon>Heunggongvirae</taxon>
        <taxon>Uroviricota</taxon>
        <taxon>Caudoviricetes</taxon>
        <taxon>Lederbergvirus</taxon>
    </lineage>
</organism>
<protein>
    <recommendedName>
        <fullName>Protein gp14</fullName>
    </recommendedName>
</protein>
<feature type="chain" id="PRO_0000077761" description="Protein gp14">
    <location>
        <begin position="1"/>
        <end position="151"/>
    </location>
</feature>
<proteinExistence type="predicted"/>
<organismHost>
    <name type="scientific">Salmonella typhimurium</name>
    <dbReference type="NCBI Taxonomy" id="90371"/>
</organismHost>
<dbReference type="EMBL" id="M93985">
    <property type="protein sequence ID" value="AAA72114.1"/>
    <property type="molecule type" value="Unassigned_DNA"/>
</dbReference>
<dbReference type="EMBL" id="AF217253">
    <property type="protein sequence ID" value="AAF75052.1"/>
    <property type="molecule type" value="Genomic_DNA"/>
</dbReference>
<dbReference type="PIR" id="B43330">
    <property type="entry name" value="B43330"/>
</dbReference>
<dbReference type="SMR" id="Q01075"/>
<dbReference type="Proteomes" id="UP000007960">
    <property type="component" value="Segment"/>
</dbReference>
<dbReference type="InterPro" id="IPR022568">
    <property type="entry name" value="DUF2824"/>
</dbReference>
<dbReference type="Pfam" id="PF11039">
    <property type="entry name" value="DUF2824"/>
    <property type="match status" value="1"/>
</dbReference>
<gene>
    <name type="primary">14</name>
</gene>